<keyword id="KW-0238">DNA-binding</keyword>
<keyword id="KW-0539">Nucleus</keyword>
<keyword id="KW-1185">Reference proteome</keyword>
<keyword id="KW-0804">Transcription</keyword>
<keyword id="KW-0805">Transcription regulation</keyword>
<proteinExistence type="evidence at protein level"/>
<reference key="1">
    <citation type="submission" date="2001-09" db="EMBL/GenBank/DDBJ databases">
        <title>Arabidopsis thaliana transcription factor WRKY68.</title>
        <authorList>
            <person name="Ulker B."/>
            <person name="Kushnir S."/>
            <person name="Somssich I.E."/>
        </authorList>
    </citation>
    <scope>NUCLEOTIDE SEQUENCE [MRNA]</scope>
    <source>
        <strain>cv. Columbia</strain>
        <tissue>Flower</tissue>
    </source>
</reference>
<reference key="2">
    <citation type="journal article" date="2000" name="Nature">
        <title>Sequence and analysis of chromosome 3 of the plant Arabidopsis thaliana.</title>
        <authorList>
            <person name="Salanoubat M."/>
            <person name="Lemcke K."/>
            <person name="Rieger M."/>
            <person name="Ansorge W."/>
            <person name="Unseld M."/>
            <person name="Fartmann B."/>
            <person name="Valle G."/>
            <person name="Bloecker H."/>
            <person name="Perez-Alonso M."/>
            <person name="Obermaier B."/>
            <person name="Delseny M."/>
            <person name="Boutry M."/>
            <person name="Grivell L.A."/>
            <person name="Mache R."/>
            <person name="Puigdomenech P."/>
            <person name="De Simone V."/>
            <person name="Choisne N."/>
            <person name="Artiguenave F."/>
            <person name="Robert C."/>
            <person name="Brottier P."/>
            <person name="Wincker P."/>
            <person name="Cattolico L."/>
            <person name="Weissenbach J."/>
            <person name="Saurin W."/>
            <person name="Quetier F."/>
            <person name="Schaefer M."/>
            <person name="Mueller-Auer S."/>
            <person name="Gabel C."/>
            <person name="Fuchs M."/>
            <person name="Benes V."/>
            <person name="Wurmbach E."/>
            <person name="Drzonek H."/>
            <person name="Erfle H."/>
            <person name="Jordan N."/>
            <person name="Bangert S."/>
            <person name="Wiedelmann R."/>
            <person name="Kranz H."/>
            <person name="Voss H."/>
            <person name="Holland R."/>
            <person name="Brandt P."/>
            <person name="Nyakatura G."/>
            <person name="Vezzi A."/>
            <person name="D'Angelo M."/>
            <person name="Pallavicini A."/>
            <person name="Toppo S."/>
            <person name="Simionati B."/>
            <person name="Conrad A."/>
            <person name="Hornischer K."/>
            <person name="Kauer G."/>
            <person name="Loehnert T.-H."/>
            <person name="Nordsiek G."/>
            <person name="Reichelt J."/>
            <person name="Scharfe M."/>
            <person name="Schoen O."/>
            <person name="Bargues M."/>
            <person name="Terol J."/>
            <person name="Climent J."/>
            <person name="Navarro P."/>
            <person name="Collado C."/>
            <person name="Perez-Perez A."/>
            <person name="Ottenwaelder B."/>
            <person name="Duchemin D."/>
            <person name="Cooke R."/>
            <person name="Laudie M."/>
            <person name="Berger-Llauro C."/>
            <person name="Purnelle B."/>
            <person name="Masuy D."/>
            <person name="de Haan M."/>
            <person name="Maarse A.C."/>
            <person name="Alcaraz J.-P."/>
            <person name="Cottet A."/>
            <person name="Casacuberta E."/>
            <person name="Monfort A."/>
            <person name="Argiriou A."/>
            <person name="Flores M."/>
            <person name="Liguori R."/>
            <person name="Vitale D."/>
            <person name="Mannhaupt G."/>
            <person name="Haase D."/>
            <person name="Schoof H."/>
            <person name="Rudd S."/>
            <person name="Zaccaria P."/>
            <person name="Mewes H.-W."/>
            <person name="Mayer K.F.X."/>
            <person name="Kaul S."/>
            <person name="Town C.D."/>
            <person name="Koo H.L."/>
            <person name="Tallon L.J."/>
            <person name="Jenkins J."/>
            <person name="Rooney T."/>
            <person name="Rizzo M."/>
            <person name="Walts A."/>
            <person name="Utterback T."/>
            <person name="Fujii C.Y."/>
            <person name="Shea T.P."/>
            <person name="Creasy T.H."/>
            <person name="Haas B."/>
            <person name="Maiti R."/>
            <person name="Wu D."/>
            <person name="Peterson J."/>
            <person name="Van Aken S."/>
            <person name="Pai G."/>
            <person name="Militscher J."/>
            <person name="Sellers P."/>
            <person name="Gill J.E."/>
            <person name="Feldblyum T.V."/>
            <person name="Preuss D."/>
            <person name="Lin X."/>
            <person name="Nierman W.C."/>
            <person name="Salzberg S.L."/>
            <person name="White O."/>
            <person name="Venter J.C."/>
            <person name="Fraser C.M."/>
            <person name="Kaneko T."/>
            <person name="Nakamura Y."/>
            <person name="Sato S."/>
            <person name="Kato T."/>
            <person name="Asamizu E."/>
            <person name="Sasamoto S."/>
            <person name="Kimura T."/>
            <person name="Idesawa K."/>
            <person name="Kawashima K."/>
            <person name="Kishida Y."/>
            <person name="Kiyokawa C."/>
            <person name="Kohara M."/>
            <person name="Matsumoto M."/>
            <person name="Matsuno A."/>
            <person name="Muraki A."/>
            <person name="Nakayama S."/>
            <person name="Nakazaki N."/>
            <person name="Shinpo S."/>
            <person name="Takeuchi C."/>
            <person name="Wada T."/>
            <person name="Watanabe A."/>
            <person name="Yamada M."/>
            <person name="Yasuda M."/>
            <person name="Tabata S."/>
        </authorList>
    </citation>
    <scope>NUCLEOTIDE SEQUENCE [LARGE SCALE GENOMIC DNA]</scope>
    <source>
        <strain>cv. Columbia</strain>
    </source>
</reference>
<reference key="3">
    <citation type="journal article" date="2017" name="Plant J.">
        <title>Araport11: a complete reannotation of the Arabidopsis thaliana reference genome.</title>
        <authorList>
            <person name="Cheng C.Y."/>
            <person name="Krishnakumar V."/>
            <person name="Chan A.P."/>
            <person name="Thibaud-Nissen F."/>
            <person name="Schobel S."/>
            <person name="Town C.D."/>
        </authorList>
    </citation>
    <scope>GENOME REANNOTATION</scope>
    <source>
        <strain>cv. Columbia</strain>
    </source>
</reference>
<organism>
    <name type="scientific">Arabidopsis thaliana</name>
    <name type="common">Mouse-ear cress</name>
    <dbReference type="NCBI Taxonomy" id="3702"/>
    <lineage>
        <taxon>Eukaryota</taxon>
        <taxon>Viridiplantae</taxon>
        <taxon>Streptophyta</taxon>
        <taxon>Embryophyta</taxon>
        <taxon>Tracheophyta</taxon>
        <taxon>Spermatophyta</taxon>
        <taxon>Magnoliopsida</taxon>
        <taxon>eudicotyledons</taxon>
        <taxon>Gunneridae</taxon>
        <taxon>Pentapetalae</taxon>
        <taxon>rosids</taxon>
        <taxon>malvids</taxon>
        <taxon>Brassicales</taxon>
        <taxon>Brassicaceae</taxon>
        <taxon>Camelineae</taxon>
        <taxon>Arabidopsis</taxon>
    </lineage>
</organism>
<evidence type="ECO:0000250" key="1"/>
<evidence type="ECO:0000255" key="2">
    <source>
        <dbReference type="PROSITE-ProRule" id="PRU00223"/>
    </source>
</evidence>
<evidence type="ECO:0000256" key="3">
    <source>
        <dbReference type="SAM" id="MobiDB-lite"/>
    </source>
</evidence>
<evidence type="ECO:0000305" key="4"/>
<accession>Q93WV6</accession>
<accession>Q9LZQ6</accession>
<feature type="chain" id="PRO_0000133709" description="WRKY transcription factor 68">
    <location>
        <begin position="1"/>
        <end position="277"/>
    </location>
</feature>
<feature type="DNA-binding region" description="WRKY" evidence="2">
    <location>
        <begin position="112"/>
        <end position="177"/>
    </location>
</feature>
<feature type="region of interest" description="Disordered" evidence="3">
    <location>
        <begin position="51"/>
        <end position="96"/>
    </location>
</feature>
<feature type="region of interest" description="Disordered" evidence="3">
    <location>
        <begin position="183"/>
        <end position="206"/>
    </location>
</feature>
<feature type="compositionally biased region" description="Polar residues" evidence="3">
    <location>
        <begin position="58"/>
        <end position="67"/>
    </location>
</feature>
<feature type="compositionally biased region" description="Acidic residues" evidence="3">
    <location>
        <begin position="69"/>
        <end position="79"/>
    </location>
</feature>
<feature type="compositionally biased region" description="Basic residues" evidence="3">
    <location>
        <begin position="84"/>
        <end position="96"/>
    </location>
</feature>
<protein>
    <recommendedName>
        <fullName>WRKY transcription factor 68</fullName>
    </recommendedName>
    <alternativeName>
        <fullName>WRKY DNA-binding protein 68</fullName>
    </alternativeName>
</protein>
<comment type="function">
    <text evidence="1">Transcription factor. Interacts specifically with the W box (5'-(T)TGAC[CT]-3'), a frequently occurring elicitor-responsive cis-acting element (By similarity).</text>
</comment>
<comment type="interaction">
    <interactant intactId="EBI-25512440">
        <id>Q93WV6</id>
    </interactant>
    <interactant intactId="EBI-604555">
        <id>Q84JU4</id>
        <label>IBR5</label>
    </interactant>
    <organismsDiffer>false</organismsDiffer>
    <experiments>3</experiments>
</comment>
<comment type="interaction">
    <interactant intactId="EBI-25512440">
        <id>Q93WV6</id>
    </interactant>
    <interactant intactId="EBI-1806244">
        <id>O64722</id>
        <label>ZHD3</label>
    </interactant>
    <organismsDiffer>false</organismsDiffer>
    <experiments>3</experiments>
</comment>
<comment type="subcellular location">
    <subcellularLocation>
        <location evidence="4">Nucleus</location>
    </subcellularLocation>
</comment>
<comment type="similarity">
    <text evidence="4">Belongs to the WRKY group II-c family.</text>
</comment>
<comment type="sequence caution" evidence="4">
    <conflict type="erroneous gene model prediction">
        <sequence resource="EMBL-CDS" id="CAB82948"/>
    </conflict>
</comment>
<sequence>MENVGVGMPFYDLGQTRVYPLLSDFHDLSAERYPVGFMDLLGVHRHTPTHTPLMHFPTTPNSSSSEAVNGDDEEEEDGEEQQHKTKKRFKFTKMSRKQTKKKVPKVSFITRSEVLHLDDGYKWRKYGQKPVKDSPFPRNYYRCTTTWCDVKKRVERSFSDPSSVITTYEGQHTHPRPLLIMPKEGSSPSNGSASRAHIGLPTLPPQLLDYNNQQQQAPSSFGTEYINRQEKGINHDDDDDHVVKKSRTRDLLDGAGLVKDHGLLQDVVPSHIIKEEY</sequence>
<name>WRK68_ARATH</name>
<dbReference type="EMBL" id="AF421155">
    <property type="protein sequence ID" value="AAL13044.1"/>
    <property type="molecule type" value="mRNA"/>
</dbReference>
<dbReference type="EMBL" id="AL162507">
    <property type="protein sequence ID" value="CAB82948.1"/>
    <property type="status" value="ALT_SEQ"/>
    <property type="molecule type" value="Genomic_DNA"/>
</dbReference>
<dbReference type="EMBL" id="CP002686">
    <property type="protein sequence ID" value="AEE80341.1"/>
    <property type="molecule type" value="Genomic_DNA"/>
</dbReference>
<dbReference type="PIR" id="T48026">
    <property type="entry name" value="T48026"/>
</dbReference>
<dbReference type="RefSeq" id="NP_567127.1">
    <property type="nucleotide sequence ID" value="NM_116099.3"/>
</dbReference>
<dbReference type="SMR" id="Q93WV6"/>
<dbReference type="BioGRID" id="10721">
    <property type="interactions" value="2"/>
</dbReference>
<dbReference type="IntAct" id="Q93WV6">
    <property type="interactions" value="2"/>
</dbReference>
<dbReference type="PaxDb" id="3702-AT3G62340.1"/>
<dbReference type="EnsemblPlants" id="AT3G62340.1">
    <property type="protein sequence ID" value="AT3G62340.1"/>
    <property type="gene ID" value="AT3G62340"/>
</dbReference>
<dbReference type="GeneID" id="825407"/>
<dbReference type="Gramene" id="AT3G62340.1">
    <property type="protein sequence ID" value="AT3G62340.1"/>
    <property type="gene ID" value="AT3G62340"/>
</dbReference>
<dbReference type="KEGG" id="ath:AT3G62340"/>
<dbReference type="Araport" id="AT3G62340"/>
<dbReference type="TAIR" id="AT3G62340">
    <property type="gene designation" value="WRKY68"/>
</dbReference>
<dbReference type="eggNOG" id="ENOG502QU0Y">
    <property type="taxonomic scope" value="Eukaryota"/>
</dbReference>
<dbReference type="HOGENOM" id="CLU_033779_0_0_1"/>
<dbReference type="InParanoid" id="Q93WV6"/>
<dbReference type="OMA" id="WCDVKKR"/>
<dbReference type="OrthoDB" id="1927637at2759"/>
<dbReference type="PhylomeDB" id="Q93WV6"/>
<dbReference type="PRO" id="PR:Q93WV6"/>
<dbReference type="Proteomes" id="UP000006548">
    <property type="component" value="Chromosome 3"/>
</dbReference>
<dbReference type="ExpressionAtlas" id="Q93WV6">
    <property type="expression patterns" value="baseline and differential"/>
</dbReference>
<dbReference type="GO" id="GO:0005634">
    <property type="term" value="C:nucleus"/>
    <property type="evidence" value="ECO:0007669"/>
    <property type="project" value="UniProtKB-SubCell"/>
</dbReference>
<dbReference type="GO" id="GO:0003700">
    <property type="term" value="F:DNA-binding transcription factor activity"/>
    <property type="evidence" value="ECO:0000250"/>
    <property type="project" value="TAIR"/>
</dbReference>
<dbReference type="GO" id="GO:0043565">
    <property type="term" value="F:sequence-specific DNA binding"/>
    <property type="evidence" value="ECO:0007669"/>
    <property type="project" value="InterPro"/>
</dbReference>
<dbReference type="FunFam" id="2.20.25.80:FF:000003">
    <property type="entry name" value="WRKY transcription factor 57"/>
    <property type="match status" value="1"/>
</dbReference>
<dbReference type="Gene3D" id="2.20.25.80">
    <property type="entry name" value="WRKY domain"/>
    <property type="match status" value="1"/>
</dbReference>
<dbReference type="InterPro" id="IPR017396">
    <property type="entry name" value="TF_WRKY_IIc"/>
</dbReference>
<dbReference type="InterPro" id="IPR003657">
    <property type="entry name" value="WRKY_dom"/>
</dbReference>
<dbReference type="InterPro" id="IPR036576">
    <property type="entry name" value="WRKY_dom_sf"/>
</dbReference>
<dbReference type="InterPro" id="IPR044810">
    <property type="entry name" value="WRKY_plant"/>
</dbReference>
<dbReference type="PANTHER" id="PTHR31221:SF289">
    <property type="entry name" value="WRKY TRANSCRIPTION FACTOR 68"/>
    <property type="match status" value="1"/>
</dbReference>
<dbReference type="PANTHER" id="PTHR31221">
    <property type="entry name" value="WRKY TRANSCRIPTION FACTOR PROTEIN 1-RELATED"/>
    <property type="match status" value="1"/>
</dbReference>
<dbReference type="Pfam" id="PF03106">
    <property type="entry name" value="WRKY"/>
    <property type="match status" value="1"/>
</dbReference>
<dbReference type="PIRSF" id="PIRSF038130">
    <property type="entry name" value="TF_WRKY_IIc"/>
    <property type="match status" value="1"/>
</dbReference>
<dbReference type="SMART" id="SM00774">
    <property type="entry name" value="WRKY"/>
    <property type="match status" value="1"/>
</dbReference>
<dbReference type="SUPFAM" id="SSF118290">
    <property type="entry name" value="WRKY DNA-binding domain"/>
    <property type="match status" value="1"/>
</dbReference>
<dbReference type="PROSITE" id="PS50811">
    <property type="entry name" value="WRKY"/>
    <property type="match status" value="1"/>
</dbReference>
<gene>
    <name type="primary">WRKY68</name>
    <name type="ordered locus">At3g62340</name>
    <name type="ORF">T12C14.40</name>
</gene>